<dbReference type="EC" id="2.-.-.-"/>
<dbReference type="EMBL" id="L42023">
    <property type="protein sequence ID" value="AAC22208.1"/>
    <property type="molecule type" value="Genomic_DNA"/>
</dbReference>
<dbReference type="EMBL" id="X56903">
    <property type="protein sequence ID" value="CAA40221.1"/>
    <property type="molecule type" value="Genomic_DNA"/>
</dbReference>
<dbReference type="EMBL" id="L19441">
    <property type="protein sequence ID" value="AAA65534.1"/>
    <property type="molecule type" value="Genomic_DNA"/>
</dbReference>
<dbReference type="PIR" id="A64077">
    <property type="entry name" value="A64077"/>
</dbReference>
<dbReference type="RefSeq" id="NP_438708.1">
    <property type="nucleotide sequence ID" value="NC_000907.1"/>
</dbReference>
<dbReference type="SMR" id="Q03974"/>
<dbReference type="STRING" id="71421.HI_0550"/>
<dbReference type="CAZy" id="GT25">
    <property type="family name" value="Glycosyltransferase Family 25"/>
</dbReference>
<dbReference type="EnsemblBacteria" id="AAC22208">
    <property type="protein sequence ID" value="AAC22208"/>
    <property type="gene ID" value="HI_0550"/>
</dbReference>
<dbReference type="KEGG" id="hin:HI_0550"/>
<dbReference type="PATRIC" id="fig|71421.8.peg.570"/>
<dbReference type="eggNOG" id="COG3306">
    <property type="taxonomic scope" value="Bacteria"/>
</dbReference>
<dbReference type="HOGENOM" id="CLU_071269_2_0_6"/>
<dbReference type="OrthoDB" id="9816113at2"/>
<dbReference type="PhylomeDB" id="Q03974"/>
<dbReference type="BioCyc" id="HINF71421:G1GJ1-563-MONOMER"/>
<dbReference type="PHI-base" id="PHI:9263"/>
<dbReference type="Proteomes" id="UP000000579">
    <property type="component" value="Chromosome"/>
</dbReference>
<dbReference type="GO" id="GO:0016757">
    <property type="term" value="F:glycosyltransferase activity"/>
    <property type="evidence" value="ECO:0007669"/>
    <property type="project" value="UniProtKB-KW"/>
</dbReference>
<dbReference type="CDD" id="cd06532">
    <property type="entry name" value="Glyco_transf_25"/>
    <property type="match status" value="1"/>
</dbReference>
<dbReference type="InterPro" id="IPR002654">
    <property type="entry name" value="Glyco_trans_25"/>
</dbReference>
<dbReference type="Pfam" id="PF01755">
    <property type="entry name" value="Glyco_transf_25"/>
    <property type="match status" value="1"/>
</dbReference>
<protein>
    <recommendedName>
        <fullName>Lipooligosaccharide biosynthesis protein lex-1</fullName>
        <ecNumber>2.-.-.-</ecNumber>
    </recommendedName>
</protein>
<name>LIC2A_HAEIN</name>
<comment type="function">
    <text>Involved in extracellular lipooligosaccharide (LOS) biosynthesis and virulence expression. Involved in the synthesis of the oligosaccharide moiety of the LOS molecule by adding GalNAc.</text>
</comment>
<comment type="domain">
    <text>Between 2 and 7 copies of the SINQ repeats are to be found in different strains; these are thought to serve to generate phase-variable expression of this gene. The (SINQ)n peptide may form a random coiled structure that permits appropriate interactions between the N- and C-terminal domains of the protein.</text>
</comment>
<comment type="similarity">
    <text evidence="2">Belongs to the glycosyltransferase 25 family.</text>
</comment>
<comment type="caution">
    <text evidence="2">It is uncertain whether Met-1 or Met-11 is the initiator.</text>
</comment>
<accession>Q03974</accession>
<accession>Q48209</accession>
<proteinExistence type="evidence at protein level"/>
<organism>
    <name type="scientific">Haemophilus influenzae (strain ATCC 51907 / DSM 11121 / KW20 / Rd)</name>
    <dbReference type="NCBI Taxonomy" id="71421"/>
    <lineage>
        <taxon>Bacteria</taxon>
        <taxon>Pseudomonadati</taxon>
        <taxon>Pseudomonadota</taxon>
        <taxon>Gammaproteobacteria</taxon>
        <taxon>Pasteurellales</taxon>
        <taxon>Pasteurellaceae</taxon>
        <taxon>Haemophilus</taxon>
    </lineage>
</organism>
<feature type="chain" id="PRO_0000216233" description="Lipooligosaccharide biosynthesis protein lex-1">
    <location>
        <begin position="1"/>
        <end position="302"/>
    </location>
</feature>
<feature type="repeat" description="1" evidence="1">
    <location>
        <begin position="42"/>
        <end position="45"/>
    </location>
</feature>
<feature type="repeat" description="2" evidence="1">
    <location>
        <begin position="46"/>
        <end position="49"/>
    </location>
</feature>
<feature type="repeat" description="3" evidence="1">
    <location>
        <begin position="50"/>
        <end position="53"/>
    </location>
</feature>
<feature type="repeat" description="4" evidence="1">
    <location>
        <begin position="54"/>
        <end position="57"/>
    </location>
</feature>
<feature type="repeat" description="5" evidence="1">
    <location>
        <begin position="58"/>
        <end position="61"/>
    </location>
</feature>
<feature type="repeat" description="6" evidence="1">
    <location>
        <begin position="62"/>
        <end position="65"/>
    </location>
</feature>
<feature type="repeat" description="7" evidence="1">
    <location>
        <begin position="66"/>
        <end position="69"/>
    </location>
</feature>
<feature type="region of interest" description="7 X 4 AA tandem repeats of S-I-N-Q">
    <location>
        <begin position="42"/>
        <end position="69"/>
    </location>
</feature>
<feature type="sequence variant" description="In strain: DL42 and RM 7004.">
    <original>K</original>
    <variation>N</variation>
    <location>
        <position position="29"/>
    </location>
</feature>
<feature type="sequence variant" description="In strain: RM 7004.">
    <location>
        <begin position="63"/>
        <end position="70"/>
    </location>
</feature>
<feature type="sequence variant" description="In strain: DL42.">
    <location>
        <begin position="67"/>
        <end position="70"/>
    </location>
</feature>
<feature type="sequence variant" description="In strain: DL42 and RM 7004.">
    <original>F</original>
    <variation>L</variation>
    <location>
        <position position="106"/>
    </location>
</feature>
<feature type="sequence variant" description="In strain: DL42 and RM 7004.">
    <original>Q</original>
    <variation>R</variation>
    <location>
        <position position="151"/>
    </location>
</feature>
<feature type="sequence variant" description="In strain: RM 7004.">
    <original>S</original>
    <variation>P</variation>
    <location>
        <position position="256"/>
    </location>
</feature>
<feature type="sequence variant" description="In strain: RM 7004.">
    <original>N</original>
    <variation>D</variation>
    <location>
        <position position="274"/>
    </location>
</feature>
<feature type="mutagenesis site" description="Reduces the rate of phase variation of the LOS, but does not abolish it." evidence="1">
    <location>
        <begin position="41"/>
        <end position="71"/>
    </location>
</feature>
<keyword id="KW-0328">Glycosyltransferase</keyword>
<keyword id="KW-1185">Reference proteome</keyword>
<keyword id="KW-0677">Repeat</keyword>
<keyword id="KW-0808">Transferase</keyword>
<keyword id="KW-0843">Virulence</keyword>
<evidence type="ECO:0000269" key="1">
    <source>
    </source>
</evidence>
<evidence type="ECO:0000305" key="2"/>
<sequence>MSAIENIVISMENATERRKHITKQFESKKLSFSFFNAYTYQSINQSINQSINQSINQSINQSINQSINQSNSILHNIEESRILTKGEKGCLISHFLLWNKCVNENFEYLKIFEDDVILGENAEVFLNQNEWLKTRFDFNDIFIIRLETFLQPVKLEKQTKIPPFNSRNFDILKSTHWGTAGYIISQGAAKYVIEYLKNIPSDEIVAVDELIFNKLVDVDNYIVYQLNPAICIQELQANQSKSVLTSGLEKERQKRSKIRKKKTLKQRLTRIKENIIRALNRKKWKEQQRIKEMQGKEIVRFM</sequence>
<reference key="1">
    <citation type="journal article" date="1995" name="Science">
        <title>Whole-genome random sequencing and assembly of Haemophilus influenzae Rd.</title>
        <authorList>
            <person name="Fleischmann R.D."/>
            <person name="Adams M.D."/>
            <person name="White O."/>
            <person name="Clayton R.A."/>
            <person name="Kirkness E.F."/>
            <person name="Kerlavage A.R."/>
            <person name="Bult C.J."/>
            <person name="Tomb J.-F."/>
            <person name="Dougherty B.A."/>
            <person name="Merrick J.M."/>
            <person name="McKenney K."/>
            <person name="Sutton G.G."/>
            <person name="FitzHugh W."/>
            <person name="Fields C.A."/>
            <person name="Gocayne J.D."/>
            <person name="Scott J.D."/>
            <person name="Shirley R."/>
            <person name="Liu L.-I."/>
            <person name="Glodek A."/>
            <person name="Kelley J.M."/>
            <person name="Weidman J.F."/>
            <person name="Phillips C.A."/>
            <person name="Spriggs T."/>
            <person name="Hedblom E."/>
            <person name="Cotton M.D."/>
            <person name="Utterback T.R."/>
            <person name="Hanna M.C."/>
            <person name="Nguyen D.T."/>
            <person name="Saudek D.M."/>
            <person name="Brandon R.C."/>
            <person name="Fine L.D."/>
            <person name="Fritchman J.L."/>
            <person name="Fuhrmann J.L."/>
            <person name="Geoghagen N.S.M."/>
            <person name="Gnehm C.L."/>
            <person name="McDonald L.A."/>
            <person name="Small K.V."/>
            <person name="Fraser C.M."/>
            <person name="Smith H.O."/>
            <person name="Venter J.C."/>
        </authorList>
    </citation>
    <scope>NUCLEOTIDE SEQUENCE [LARGE SCALE GENOMIC DNA]</scope>
    <source>
        <strain>ATCC 51907 / DSM 11121 / KW20 / Rd</strain>
    </source>
</reference>
<reference key="2">
    <citation type="journal article" date="1991" name="Mol. Microbiol.">
        <title>Molecular cloning of a gene involved in lipooligosaccharide biosynthesis and virulence expression by Haemophilus influenzae type B.</title>
        <authorList>
            <person name="Cope L.D."/>
            <person name="Yogev R."/>
            <person name="Mertsola J."/>
            <person name="Latimer J.L."/>
            <person name="Hanson M.S."/>
            <person name="McCracken G.H. Jr."/>
            <person name="Hansen E.J."/>
        </authorList>
    </citation>
    <scope>NUCLEOTIDE SEQUENCE [GENOMIC DNA]</scope>
    <source>
        <strain>DL42 / Serotype B</strain>
    </source>
</reference>
<reference key="3">
    <citation type="journal article" date="1993" name="Mol. Microbiol.">
        <title>The role of a repetitive DNA motif (5'-CAAT-3') in the variable expression of the Haemophilus influenzae lipopolysaccharide epitope alpha Gal(1-4)beta Gal.</title>
        <authorList>
            <person name="High N.J."/>
            <person name="Deadman M.E."/>
            <person name="Moxon E.R."/>
        </authorList>
    </citation>
    <scope>NUCLEOTIDE SEQUENCE [GENOMIC DNA]</scope>
    <source>
        <strain>RM 7004 / Serotype B</strain>
    </source>
</reference>
<reference key="4">
    <citation type="journal article" date="1996" name="Mol. Microbiol.">
        <title>Tandem repeats of the tetramer 5'-CAAT-3' present in lic2A are required for phase variation but not lipopolysaccharide biosynthesis in Haemophilus influenzae.</title>
        <authorList>
            <person name="High N.J."/>
            <person name="Jennings M.P."/>
            <person name="Moxon E.R."/>
        </authorList>
    </citation>
    <scope>MUTAGENESIS OF THE SINQ REPEATS</scope>
    <scope>EXTENT OF VARIATION IN REPEAT NUMBERS</scope>
    <source>
        <strain>26 strains</strain>
        <strain>RM 7004 / Serotype B</strain>
    </source>
</reference>
<gene>
    <name type="primary">lex1</name>
    <name type="synonym">lic2A</name>
    <name type="ordered locus">HI_0550</name>
</gene>